<keyword id="KW-0044">Antibiotic</keyword>
<keyword id="KW-0929">Antimicrobial</keyword>
<keyword id="KW-0078">Bacteriocin</keyword>
<keyword id="KW-0425">Lantibiotic</keyword>
<keyword id="KW-0964">Secreted</keyword>
<keyword id="KW-0732">Signal</keyword>
<keyword id="KW-0883">Thioether bond</keyword>
<gene>
    <name type="primary">rumA1</name>
</gene>
<gene>
    <name type="primary">rumA2</name>
</gene>
<gene>
    <name type="primary">rumA3</name>
</gene>
<feature type="signal peptide" evidence="1">
    <location>
        <begin position="1"/>
        <end position="23"/>
    </location>
</feature>
<feature type="peptide" id="PRO_0000017126" description="Ruminococcin-A">
    <location>
        <begin position="24"/>
        <end position="47"/>
    </location>
</feature>
<feature type="modified residue" description="2,3-didehydrobutyrine" evidence="3">
    <location>
        <position position="30"/>
    </location>
</feature>
<feature type="modified residue" description="2,3-didehydrobutyrine" evidence="3">
    <location>
        <position position="39"/>
    </location>
</feature>
<feature type="cross-link" description="Beta-methyllanthionine (Thr-Cys)" evidence="3">
    <location>
        <begin position="30"/>
        <end position="35"/>
    </location>
</feature>
<feature type="cross-link" description="Lanthionine (Ser-Cys)" evidence="3">
    <location>
        <begin position="32"/>
        <end position="46"/>
    </location>
</feature>
<feature type="cross-link" description="Beta-methyllanthionine (Thr-Cys)" evidence="3">
    <location>
        <begin position="45"/>
        <end position="47"/>
    </location>
</feature>
<evidence type="ECO:0000250" key="1"/>
<evidence type="ECO:0000250" key="2">
    <source>
        <dbReference type="UniProtKB" id="P36499"/>
    </source>
</evidence>
<evidence type="ECO:0000250" key="3">
    <source>
        <dbReference type="UniProtKB" id="P83674"/>
    </source>
</evidence>
<evidence type="ECO:0000250" key="4">
    <source>
        <dbReference type="UniProtKB" id="P83677"/>
    </source>
</evidence>
<evidence type="ECO:0000303" key="5">
    <source>
    </source>
</evidence>
<evidence type="ECO:0000305" key="6"/>
<evidence type="ECO:0000312" key="7">
    <source>
        <dbReference type="EMBL" id="AAL73934.1"/>
    </source>
</evidence>
<accession>P83675</accession>
<accession>P83679</accession>
<accession>P83680</accession>
<accession>Q8VLK0</accession>
<organism evidence="7">
    <name type="scientific">Blautia hansenii</name>
    <name type="common">Ruminococcus hansenii</name>
    <dbReference type="NCBI Taxonomy" id="1322"/>
    <lineage>
        <taxon>Bacteria</taxon>
        <taxon>Bacillati</taxon>
        <taxon>Bacillota</taxon>
        <taxon>Clostridia</taxon>
        <taxon>Lachnospirales</taxon>
        <taxon>Lachnospiraceae</taxon>
        <taxon>Blautia</taxon>
    </lineage>
</organism>
<reference evidence="7" key="1">
    <citation type="journal article" date="2002" name="Appl. Environ. Microbiol.">
        <title>Distribution of genes encoding the trypsin-dependent lantibiotic ruminococcin A among bacteria isolated from human fecal microbiota.</title>
        <authorList>
            <person name="Marcille F."/>
            <person name="Gomez A."/>
            <person name="Joubert P."/>
            <person name="Ladire M."/>
            <person name="Veau G."/>
            <person name="Clara A."/>
            <person name="Gavini F."/>
            <person name="Willems A."/>
            <person name="Fons M."/>
        </authorList>
    </citation>
    <scope>NUCLEOTIDE SEQUENCE [GENOMIC DNA] (RUMA1; RUMA2 AND RUMA3)</scope>
    <source>
        <strain evidence="7">LEMV98</strain>
    </source>
</reference>
<sequence>MRNDVLTLTNPMEENELEQILGGGNGVLKTISHECNMNTWQFLFTCC</sequence>
<comment type="function">
    <text evidence="2 4">Lanthionine-containing peptide antibiotic (lantibiotic) active on Gram-positive bacteria. The bactericidal activity of lantibiotics is based on depolarization of energized bacterial cytoplasmic membranes, initiated by the formation of aqueous transmembrane pores. Ruminococcin A is a broad spectrum bacteriocin exhibiting activity against a wide range of pathogenic clostridia and B.longum (By similarity).</text>
</comment>
<comment type="subcellular location">
    <subcellularLocation>
        <location evidence="4">Secreted</location>
    </subcellularLocation>
</comment>
<comment type="PTM">
    <text evidence="5">Maturation of lantibiotics involves the enzymatic conversion of Thr, and Ser into dehydrated AA and the formation of thioether bonds with cysteine. This is followed by membrane translocation and cleavage of the modified precursor.</text>
</comment>
<comment type="similarity">
    <text evidence="6">Belongs to the type A lantibiotic family.</text>
</comment>
<name>LANA_BLAHA</name>
<proteinExistence type="inferred from homology"/>
<dbReference type="EMBL" id="AF439552">
    <property type="protein sequence ID" value="AAL73934.1"/>
    <property type="molecule type" value="Genomic_DNA"/>
</dbReference>
<dbReference type="EMBL" id="AF439552">
    <property type="protein sequence ID" value="AAL73935.1"/>
    <property type="molecule type" value="Genomic_DNA"/>
</dbReference>
<dbReference type="EMBL" id="AF439552">
    <property type="protein sequence ID" value="AAL73936.1"/>
    <property type="molecule type" value="Genomic_DNA"/>
</dbReference>
<dbReference type="GO" id="GO:0005576">
    <property type="term" value="C:extracellular region"/>
    <property type="evidence" value="ECO:0000250"/>
    <property type="project" value="UniProtKB"/>
</dbReference>
<dbReference type="GO" id="GO:0005102">
    <property type="term" value="F:signaling receptor binding"/>
    <property type="evidence" value="ECO:0007669"/>
    <property type="project" value="UniProtKB-KW"/>
</dbReference>
<dbReference type="GO" id="GO:0050830">
    <property type="term" value="P:defense response to Gram-positive bacterium"/>
    <property type="evidence" value="ECO:0000250"/>
    <property type="project" value="UniProtKB"/>
</dbReference>
<dbReference type="GO" id="GO:0031640">
    <property type="term" value="P:killing of cells of another organism"/>
    <property type="evidence" value="ECO:0007669"/>
    <property type="project" value="UniProtKB-KW"/>
</dbReference>
<dbReference type="GO" id="GO:0006965">
    <property type="term" value="P:positive regulation of biosynthetic process of antibacterial peptides active against Gram-positive bacteria"/>
    <property type="evidence" value="ECO:0000250"/>
    <property type="project" value="UniProtKB"/>
</dbReference>
<dbReference type="InterPro" id="IPR007682">
    <property type="entry name" value="Lantibiotic_typ-A_Lactobact"/>
</dbReference>
<dbReference type="NCBIfam" id="NF040664">
    <property type="entry name" value="HEC_x9_TCC_lant"/>
    <property type="match status" value="1"/>
</dbReference>
<dbReference type="Pfam" id="PF04604">
    <property type="entry name" value="L_biotic_typeA"/>
    <property type="match status" value="1"/>
</dbReference>
<protein>
    <recommendedName>
        <fullName>Ruminococcin-A</fullName>
    </recommendedName>
</protein>